<keyword id="KW-0963">Cytoplasm</keyword>
<keyword id="KW-0269">Exonuclease</keyword>
<keyword id="KW-0378">Hydrolase</keyword>
<keyword id="KW-0540">Nuclease</keyword>
<name>EX7L_NEIMA</name>
<protein>
    <recommendedName>
        <fullName evidence="1">Exodeoxyribonuclease 7 large subunit</fullName>
        <ecNumber evidence="1">3.1.11.6</ecNumber>
    </recommendedName>
    <alternativeName>
        <fullName evidence="1">Exodeoxyribonuclease VII large subunit</fullName>
        <shortName evidence="1">Exonuclease VII large subunit</shortName>
    </alternativeName>
</protein>
<proteinExistence type="inferred from homology"/>
<sequence length="451" mass="49849">MSDFFHSDVLSVSELNAFAKSLLENHLAGLWIAGEVSNLTRAASGHYYFSLKDSRAQVRCAMFKGAAARLAKPLKEGDHIEVSGKISIYEARGEFQITVNEVRLKGLGQLYEAYERLKAQLQAEGAFAAERKKPLPTRPQCIGIVTSLAAAALRDVVTTLKRRAPEIPVIVYPTPVQGAGSELQIAQAIKTASQRAECDVLIVCRGGGSIEDLWAFNEEPVVRAIEACTVPVVSGVGHETDFTLADFVADVRAPTPTGAAELVSPNRQESLHRLAQAQGRLKTVLEQRYFDASQKLDWLARQIRHPRQKLDEQRASIGKLAQTLSYSMKQNLRAHTARFERQTQALQHYRPDVSVCKNNIVRLQTALPAAFSQLLTHRRQSLTAQAALLEAVSPQHILERGFSVVKNTRGQVIRNADVLKQGQKLHITFADGETDVRVSKEQGQQDLFDCI</sequence>
<dbReference type="EC" id="3.1.11.6" evidence="1"/>
<dbReference type="EMBL" id="AL157959">
    <property type="protein sequence ID" value="CAM08720.1"/>
    <property type="molecule type" value="Genomic_DNA"/>
</dbReference>
<dbReference type="PIR" id="B81850">
    <property type="entry name" value="B81850"/>
</dbReference>
<dbReference type="RefSeq" id="WP_002229594.1">
    <property type="nucleotide sequence ID" value="NC_003116.1"/>
</dbReference>
<dbReference type="SMR" id="Q9JTY8"/>
<dbReference type="EnsemblBacteria" id="CAM08720">
    <property type="protein sequence ID" value="CAM08720"/>
    <property type="gene ID" value="NMA1575"/>
</dbReference>
<dbReference type="GeneID" id="93388000"/>
<dbReference type="KEGG" id="nma:NMA1575"/>
<dbReference type="HOGENOM" id="CLU_023625_3_1_4"/>
<dbReference type="Proteomes" id="UP000000626">
    <property type="component" value="Chromosome"/>
</dbReference>
<dbReference type="GO" id="GO:0005737">
    <property type="term" value="C:cytoplasm"/>
    <property type="evidence" value="ECO:0007669"/>
    <property type="project" value="UniProtKB-SubCell"/>
</dbReference>
<dbReference type="GO" id="GO:0009318">
    <property type="term" value="C:exodeoxyribonuclease VII complex"/>
    <property type="evidence" value="ECO:0007669"/>
    <property type="project" value="InterPro"/>
</dbReference>
<dbReference type="GO" id="GO:0008855">
    <property type="term" value="F:exodeoxyribonuclease VII activity"/>
    <property type="evidence" value="ECO:0007669"/>
    <property type="project" value="UniProtKB-UniRule"/>
</dbReference>
<dbReference type="GO" id="GO:0003676">
    <property type="term" value="F:nucleic acid binding"/>
    <property type="evidence" value="ECO:0007669"/>
    <property type="project" value="InterPro"/>
</dbReference>
<dbReference type="GO" id="GO:0006308">
    <property type="term" value="P:DNA catabolic process"/>
    <property type="evidence" value="ECO:0007669"/>
    <property type="project" value="UniProtKB-UniRule"/>
</dbReference>
<dbReference type="CDD" id="cd04489">
    <property type="entry name" value="ExoVII_LU_OBF"/>
    <property type="match status" value="1"/>
</dbReference>
<dbReference type="Gene3D" id="2.40.50.1010">
    <property type="match status" value="1"/>
</dbReference>
<dbReference type="HAMAP" id="MF_00378">
    <property type="entry name" value="Exonuc_7_L"/>
    <property type="match status" value="1"/>
</dbReference>
<dbReference type="InterPro" id="IPR003753">
    <property type="entry name" value="Exonuc_VII_L"/>
</dbReference>
<dbReference type="InterPro" id="IPR020579">
    <property type="entry name" value="Exonuc_VII_lsu_C"/>
</dbReference>
<dbReference type="InterPro" id="IPR025824">
    <property type="entry name" value="OB-fold_nuc-bd_dom"/>
</dbReference>
<dbReference type="NCBIfam" id="TIGR00237">
    <property type="entry name" value="xseA"/>
    <property type="match status" value="1"/>
</dbReference>
<dbReference type="PANTHER" id="PTHR30008">
    <property type="entry name" value="EXODEOXYRIBONUCLEASE 7 LARGE SUBUNIT"/>
    <property type="match status" value="1"/>
</dbReference>
<dbReference type="PANTHER" id="PTHR30008:SF0">
    <property type="entry name" value="EXODEOXYRIBONUCLEASE 7 LARGE SUBUNIT"/>
    <property type="match status" value="1"/>
</dbReference>
<dbReference type="Pfam" id="PF02601">
    <property type="entry name" value="Exonuc_VII_L"/>
    <property type="match status" value="1"/>
</dbReference>
<dbReference type="Pfam" id="PF13742">
    <property type="entry name" value="tRNA_anti_2"/>
    <property type="match status" value="1"/>
</dbReference>
<feature type="chain" id="PRO_0000197862" description="Exodeoxyribonuclease 7 large subunit">
    <location>
        <begin position="1"/>
        <end position="451"/>
    </location>
</feature>
<accession>Q9JTY8</accession>
<accession>A1ISG4</accession>
<comment type="function">
    <text evidence="1">Bidirectionally degrades single-stranded DNA into large acid-insoluble oligonucleotides, which are then degraded further into small acid-soluble oligonucleotides.</text>
</comment>
<comment type="catalytic activity">
    <reaction evidence="1">
        <text>Exonucleolytic cleavage in either 5'- to 3'- or 3'- to 5'-direction to yield nucleoside 5'-phosphates.</text>
        <dbReference type="EC" id="3.1.11.6"/>
    </reaction>
</comment>
<comment type="subunit">
    <text evidence="1">Heterooligomer composed of large and small subunits.</text>
</comment>
<comment type="subcellular location">
    <subcellularLocation>
        <location evidence="1">Cytoplasm</location>
    </subcellularLocation>
</comment>
<comment type="similarity">
    <text evidence="1">Belongs to the XseA family.</text>
</comment>
<organism>
    <name type="scientific">Neisseria meningitidis serogroup A / serotype 4A (strain DSM 15465 / Z2491)</name>
    <dbReference type="NCBI Taxonomy" id="122587"/>
    <lineage>
        <taxon>Bacteria</taxon>
        <taxon>Pseudomonadati</taxon>
        <taxon>Pseudomonadota</taxon>
        <taxon>Betaproteobacteria</taxon>
        <taxon>Neisseriales</taxon>
        <taxon>Neisseriaceae</taxon>
        <taxon>Neisseria</taxon>
    </lineage>
</organism>
<gene>
    <name evidence="1" type="primary">xseA</name>
    <name type="ordered locus">NMA1575</name>
</gene>
<reference key="1">
    <citation type="journal article" date="2000" name="Nature">
        <title>Complete DNA sequence of a serogroup A strain of Neisseria meningitidis Z2491.</title>
        <authorList>
            <person name="Parkhill J."/>
            <person name="Achtman M."/>
            <person name="James K.D."/>
            <person name="Bentley S.D."/>
            <person name="Churcher C.M."/>
            <person name="Klee S.R."/>
            <person name="Morelli G."/>
            <person name="Basham D."/>
            <person name="Brown D."/>
            <person name="Chillingworth T."/>
            <person name="Davies R.M."/>
            <person name="Davis P."/>
            <person name="Devlin K."/>
            <person name="Feltwell T."/>
            <person name="Hamlin N."/>
            <person name="Holroyd S."/>
            <person name="Jagels K."/>
            <person name="Leather S."/>
            <person name="Moule S."/>
            <person name="Mungall K.L."/>
            <person name="Quail M.A."/>
            <person name="Rajandream M.A."/>
            <person name="Rutherford K.M."/>
            <person name="Simmonds M."/>
            <person name="Skelton J."/>
            <person name="Whitehead S."/>
            <person name="Spratt B.G."/>
            <person name="Barrell B.G."/>
        </authorList>
    </citation>
    <scope>NUCLEOTIDE SEQUENCE [LARGE SCALE GENOMIC DNA]</scope>
    <source>
        <strain>DSM 15465 / Z2491</strain>
    </source>
</reference>
<evidence type="ECO:0000255" key="1">
    <source>
        <dbReference type="HAMAP-Rule" id="MF_00378"/>
    </source>
</evidence>